<reference key="1">
    <citation type="journal article" date="2010" name="J. Bacteriol.">
        <title>Genome sequence of the polysaccharide-degrading, thermophilic anaerobe Spirochaeta thermophila DSM 6192.</title>
        <authorList>
            <person name="Angelov A."/>
            <person name="Liebl S."/>
            <person name="Ballschmiter M."/>
            <person name="Bomeke M."/>
            <person name="Lehmann R."/>
            <person name="Liesegang H."/>
            <person name="Daniel R."/>
            <person name="Liebl W."/>
        </authorList>
    </citation>
    <scope>NUCLEOTIDE SEQUENCE [LARGE SCALE GENOMIC DNA]</scope>
    <source>
        <strain>ATCC 49972 / DSM 6192 / RI 19.B1</strain>
    </source>
</reference>
<reference key="2">
    <citation type="journal article" date="2001" name="Arch. Microbiol.">
        <title>Sequencing, high-level expression and phylogeny of the pyrophosphate-dependent phosphofructokinase from the thermophilic spirochete Spirochaeta thermophila.</title>
        <authorList>
            <person name="Ronimus R."/>
            <person name="de Heus E."/>
            <person name="Ruckert A."/>
            <person name="Morgan H."/>
        </authorList>
    </citation>
    <scope>NUCLEOTIDE SEQUENCE [GENOMIC DNA] OF 45-145</scope>
</reference>
<keyword id="KW-0067">ATP-binding</keyword>
<keyword id="KW-0963">Cytoplasm</keyword>
<keyword id="KW-0324">Glycolysis</keyword>
<keyword id="KW-0418">Kinase</keyword>
<keyword id="KW-0460">Magnesium</keyword>
<keyword id="KW-0479">Metal-binding</keyword>
<keyword id="KW-0547">Nucleotide-binding</keyword>
<keyword id="KW-0808">Transferase</keyword>
<organism>
    <name type="scientific">Spirochaeta thermophila (strain ATCC 49972 / DSM 6192 / RI 19.B1)</name>
    <dbReference type="NCBI Taxonomy" id="665571"/>
    <lineage>
        <taxon>Bacteria</taxon>
        <taxon>Pseudomonadati</taxon>
        <taxon>Spirochaetota</taxon>
        <taxon>Spirochaetia</taxon>
        <taxon>Spirochaetales</taxon>
        <taxon>Spirochaetaceae</taxon>
        <taxon>Spirochaeta</taxon>
    </lineage>
</organism>
<sequence>MKRPATRTFGILTSGGDCPGLNAAIRGVTKAAYWRYGMSIIGISHGYRGLIEGDARLLHPRDFDGILTRGGTILGTSREKPFKPDPGEKDSEAGSRKVEAIIENYHKLHLDCLVVLGGNGTHKTAYLLQQAGLNVIGLPKTIDNDIWGTDVTFGFHSAVDIATEAIDRLHSTAHAHNRVMVIEVMGHKAGWLALYAGIAGGGDIILIPEIPYDLAHIVHHLQTRQQRGKEFSIVVVAEGALSREESLMSKEERKKRRKKNRFPTKGYEVAHLIQEATGMETRVTVLGYLQRGGTPSPYDRLLATRFGTAAAELLYRGDYGKMVALRDGEVVAIPLGEVAEKLKTVPPDHPLIDTARAVGTCFGDGV</sequence>
<comment type="function">
    <text evidence="1">Catalyzes the phosphorylation of D-fructose 6-phosphate to fructose 1,6-bisphosphate by ATP, the first committing step of glycolysis.</text>
</comment>
<comment type="catalytic activity">
    <reaction evidence="1">
        <text>beta-D-fructose 6-phosphate + ATP = beta-D-fructose 1,6-bisphosphate + ADP + H(+)</text>
        <dbReference type="Rhea" id="RHEA:16109"/>
        <dbReference type="ChEBI" id="CHEBI:15378"/>
        <dbReference type="ChEBI" id="CHEBI:30616"/>
        <dbReference type="ChEBI" id="CHEBI:32966"/>
        <dbReference type="ChEBI" id="CHEBI:57634"/>
        <dbReference type="ChEBI" id="CHEBI:456216"/>
        <dbReference type="EC" id="2.7.1.11"/>
    </reaction>
</comment>
<comment type="cofactor">
    <cofactor evidence="1">
        <name>Mg(2+)</name>
        <dbReference type="ChEBI" id="CHEBI:18420"/>
    </cofactor>
</comment>
<comment type="pathway">
    <text evidence="1">Carbohydrate degradation; glycolysis; D-glyceraldehyde 3-phosphate and glycerone phosphate from D-glucose: step 3/4.</text>
</comment>
<comment type="subunit">
    <text evidence="1">Homodimer or homotetramer.</text>
</comment>
<comment type="subcellular location">
    <subcellularLocation>
        <location evidence="1">Cytoplasm</location>
    </subcellularLocation>
</comment>
<comment type="similarity">
    <text evidence="1">Belongs to the phosphofructokinase type A (PFKA) family. Mixed-substrate PFK group III subfamily.</text>
</comment>
<evidence type="ECO:0000255" key="1">
    <source>
        <dbReference type="HAMAP-Rule" id="MF_01976"/>
    </source>
</evidence>
<evidence type="ECO:0000256" key="2">
    <source>
        <dbReference type="SAM" id="MobiDB-lite"/>
    </source>
</evidence>
<dbReference type="EC" id="2.7.1.11" evidence="1"/>
<dbReference type="EMBL" id="CP001698">
    <property type="protein sequence ID" value="ADN01005.1"/>
    <property type="molecule type" value="Genomic_DNA"/>
</dbReference>
<dbReference type="EMBL" id="AF342985">
    <property type="protein sequence ID" value="AAK16737.1"/>
    <property type="molecule type" value="Genomic_DNA"/>
</dbReference>
<dbReference type="RefSeq" id="WP_013312846.1">
    <property type="nucleotide sequence ID" value="NC_014484.1"/>
</dbReference>
<dbReference type="SMR" id="E0RTD9"/>
<dbReference type="PaxDb" id="665571-STHERM_c00290"/>
<dbReference type="KEGG" id="sta:STHERM_c00290"/>
<dbReference type="eggNOG" id="COG0205">
    <property type="taxonomic scope" value="Bacteria"/>
</dbReference>
<dbReference type="HOGENOM" id="CLU_020655_0_0_12"/>
<dbReference type="UniPathway" id="UPA00109">
    <property type="reaction ID" value="UER00182"/>
</dbReference>
<dbReference type="Proteomes" id="UP000001296">
    <property type="component" value="Chromosome"/>
</dbReference>
<dbReference type="GO" id="GO:0005945">
    <property type="term" value="C:6-phosphofructokinase complex"/>
    <property type="evidence" value="ECO:0007669"/>
    <property type="project" value="TreeGrafter"/>
</dbReference>
<dbReference type="GO" id="GO:0003872">
    <property type="term" value="F:6-phosphofructokinase activity"/>
    <property type="evidence" value="ECO:0007669"/>
    <property type="project" value="UniProtKB-UniRule"/>
</dbReference>
<dbReference type="GO" id="GO:0016208">
    <property type="term" value="F:AMP binding"/>
    <property type="evidence" value="ECO:0007669"/>
    <property type="project" value="TreeGrafter"/>
</dbReference>
<dbReference type="GO" id="GO:0005524">
    <property type="term" value="F:ATP binding"/>
    <property type="evidence" value="ECO:0007669"/>
    <property type="project" value="UniProtKB-KW"/>
</dbReference>
<dbReference type="GO" id="GO:0047334">
    <property type="term" value="F:diphosphate-fructose-6-phosphate 1-phosphotransferase activity"/>
    <property type="evidence" value="ECO:0007669"/>
    <property type="project" value="InterPro"/>
</dbReference>
<dbReference type="GO" id="GO:0070095">
    <property type="term" value="F:fructose-6-phosphate binding"/>
    <property type="evidence" value="ECO:0007669"/>
    <property type="project" value="TreeGrafter"/>
</dbReference>
<dbReference type="GO" id="GO:0042802">
    <property type="term" value="F:identical protein binding"/>
    <property type="evidence" value="ECO:0007669"/>
    <property type="project" value="TreeGrafter"/>
</dbReference>
<dbReference type="GO" id="GO:0046872">
    <property type="term" value="F:metal ion binding"/>
    <property type="evidence" value="ECO:0007669"/>
    <property type="project" value="UniProtKB-KW"/>
</dbReference>
<dbReference type="GO" id="GO:0048029">
    <property type="term" value="F:monosaccharide binding"/>
    <property type="evidence" value="ECO:0007669"/>
    <property type="project" value="TreeGrafter"/>
</dbReference>
<dbReference type="GO" id="GO:0061621">
    <property type="term" value="P:canonical glycolysis"/>
    <property type="evidence" value="ECO:0007669"/>
    <property type="project" value="TreeGrafter"/>
</dbReference>
<dbReference type="GO" id="GO:0030388">
    <property type="term" value="P:fructose 1,6-bisphosphate metabolic process"/>
    <property type="evidence" value="ECO:0007669"/>
    <property type="project" value="TreeGrafter"/>
</dbReference>
<dbReference type="GO" id="GO:0006002">
    <property type="term" value="P:fructose 6-phosphate metabolic process"/>
    <property type="evidence" value="ECO:0007669"/>
    <property type="project" value="InterPro"/>
</dbReference>
<dbReference type="FunFam" id="3.40.50.460:FF:000002">
    <property type="entry name" value="ATP-dependent 6-phosphofructokinase"/>
    <property type="match status" value="1"/>
</dbReference>
<dbReference type="Gene3D" id="3.40.50.450">
    <property type="match status" value="1"/>
</dbReference>
<dbReference type="Gene3D" id="3.40.50.460">
    <property type="entry name" value="Phosphofructokinase domain"/>
    <property type="match status" value="1"/>
</dbReference>
<dbReference type="HAMAP" id="MF_01976">
    <property type="entry name" value="Phosphofructokinase_III"/>
    <property type="match status" value="1"/>
</dbReference>
<dbReference type="InterPro" id="IPR022953">
    <property type="entry name" value="ATP_PFK"/>
</dbReference>
<dbReference type="InterPro" id="IPR012003">
    <property type="entry name" value="ATP_PFK_prok-type"/>
</dbReference>
<dbReference type="InterPro" id="IPR000023">
    <property type="entry name" value="Phosphofructokinase_dom"/>
</dbReference>
<dbReference type="InterPro" id="IPR012829">
    <property type="entry name" value="Phosphofructokinase_III"/>
</dbReference>
<dbReference type="InterPro" id="IPR035966">
    <property type="entry name" value="PKF_sf"/>
</dbReference>
<dbReference type="NCBIfam" id="NF002872">
    <property type="entry name" value="PRK03202.1"/>
    <property type="match status" value="1"/>
</dbReference>
<dbReference type="PANTHER" id="PTHR13697:SF52">
    <property type="entry name" value="ATP-DEPENDENT 6-PHOSPHOFRUCTOKINASE 3"/>
    <property type="match status" value="1"/>
</dbReference>
<dbReference type="PANTHER" id="PTHR13697">
    <property type="entry name" value="PHOSPHOFRUCTOKINASE"/>
    <property type="match status" value="1"/>
</dbReference>
<dbReference type="Pfam" id="PF00365">
    <property type="entry name" value="PFK"/>
    <property type="match status" value="1"/>
</dbReference>
<dbReference type="PIRSF" id="PIRSF000532">
    <property type="entry name" value="ATP_PFK_prok"/>
    <property type="match status" value="1"/>
</dbReference>
<dbReference type="PRINTS" id="PR00476">
    <property type="entry name" value="PHFRCTKINASE"/>
</dbReference>
<dbReference type="SUPFAM" id="SSF53784">
    <property type="entry name" value="Phosphofructokinase"/>
    <property type="match status" value="1"/>
</dbReference>
<protein>
    <recommendedName>
        <fullName evidence="1">ATP-dependent 6-phosphofructokinase</fullName>
        <shortName evidence="1">ATP-PFK</shortName>
        <shortName evidence="1">Phosphofructokinase</shortName>
        <ecNumber evidence="1">2.7.1.11</ecNumber>
    </recommendedName>
    <alternativeName>
        <fullName evidence="1">Phosphohexokinase</fullName>
    </alternativeName>
</protein>
<feature type="chain" id="PRO_0000429709" description="ATP-dependent 6-phosphofructokinase">
    <location>
        <begin position="1"/>
        <end position="366"/>
    </location>
</feature>
<feature type="region of interest" description="Disordered" evidence="2">
    <location>
        <begin position="74"/>
        <end position="94"/>
    </location>
</feature>
<feature type="compositionally biased region" description="Basic and acidic residues" evidence="2">
    <location>
        <begin position="77"/>
        <end position="94"/>
    </location>
</feature>
<feature type="active site" description="Proton acceptor" evidence="1">
    <location>
        <position position="143"/>
    </location>
</feature>
<feature type="binding site" evidence="1">
    <location>
        <position position="16"/>
    </location>
    <ligand>
        <name>ATP</name>
        <dbReference type="ChEBI" id="CHEBI:30616"/>
    </ligand>
</feature>
<feature type="binding site" evidence="1">
    <location>
        <begin position="78"/>
        <end position="79"/>
    </location>
    <ligand>
        <name>ATP</name>
        <dbReference type="ChEBI" id="CHEBI:30616"/>
    </ligand>
</feature>
<feature type="binding site" evidence="1">
    <location>
        <begin position="118"/>
        <end position="121"/>
    </location>
    <ligand>
        <name>ATP</name>
        <dbReference type="ChEBI" id="CHEBI:30616"/>
    </ligand>
</feature>
<feature type="binding site" evidence="1">
    <location>
        <position position="119"/>
    </location>
    <ligand>
        <name>Mg(2+)</name>
        <dbReference type="ChEBI" id="CHEBI:18420"/>
        <note>catalytic</note>
    </ligand>
</feature>
<feature type="binding site" description="in other chain" evidence="1">
    <location>
        <begin position="141"/>
        <end position="143"/>
    </location>
    <ligand>
        <name>substrate</name>
        <note>ligand shared between dimeric partners</note>
    </ligand>
</feature>
<feature type="binding site" evidence="1">
    <location>
        <position position="178"/>
    </location>
    <ligand>
        <name>substrate</name>
        <note>ligand shared between dimeric partners</note>
    </ligand>
</feature>
<feature type="binding site" description="in other chain" evidence="1">
    <location>
        <begin position="185"/>
        <end position="187"/>
    </location>
    <ligand>
        <name>substrate</name>
        <note>ligand shared between dimeric partners</note>
    </ligand>
</feature>
<feature type="binding site" description="in other chain" evidence="1">
    <location>
        <position position="238"/>
    </location>
    <ligand>
        <name>substrate</name>
        <note>ligand shared between dimeric partners</note>
    </ligand>
</feature>
<feature type="binding site" evidence="1">
    <location>
        <position position="282"/>
    </location>
    <ligand>
        <name>substrate</name>
        <note>ligand shared between dimeric partners</note>
    </ligand>
</feature>
<feature type="binding site" description="in other chain" evidence="1">
    <location>
        <begin position="288"/>
        <end position="291"/>
    </location>
    <ligand>
        <name>substrate</name>
        <note>ligand shared between dimeric partners</note>
    </ligand>
</feature>
<feature type="site" description="Important for substrate specificity; cannot use PPi as phosphoryl donor" evidence="1">
    <location>
        <position position="120"/>
    </location>
</feature>
<name>PFKA_SPITD</name>
<accession>E0RTD9</accession>
<accession>Q9AG65</accession>
<proteinExistence type="inferred from homology"/>
<gene>
    <name evidence="1" type="primary">pfkA</name>
    <name type="synonym">pfkA3</name>
    <name type="ordered locus">STHERM_c00290</name>
</gene>